<keyword id="KW-0150">Chloroplast</keyword>
<keyword id="KW-0472">Membrane</keyword>
<keyword id="KW-0602">Photosynthesis</keyword>
<keyword id="KW-0934">Plastid</keyword>
<keyword id="KW-0793">Thylakoid</keyword>
<keyword id="KW-0812">Transmembrane</keyword>
<keyword id="KW-1133">Transmembrane helix</keyword>
<geneLocation type="chloroplast"/>
<organism>
    <name type="scientific">Pinus thunbergii</name>
    <name type="common">Japanese black pine</name>
    <name type="synonym">Pinus thunbergiana</name>
    <dbReference type="NCBI Taxonomy" id="3350"/>
    <lineage>
        <taxon>Eukaryota</taxon>
        <taxon>Viridiplantae</taxon>
        <taxon>Streptophyta</taxon>
        <taxon>Embryophyta</taxon>
        <taxon>Tracheophyta</taxon>
        <taxon>Spermatophyta</taxon>
        <taxon>Pinopsida</taxon>
        <taxon>Pinidae</taxon>
        <taxon>Conifers I</taxon>
        <taxon>Pinales</taxon>
        <taxon>Pinaceae</taxon>
        <taxon>Pinus</taxon>
        <taxon>Pinus subgen. Pinus</taxon>
    </lineage>
</organism>
<gene>
    <name evidence="1" type="primary">ycf4</name>
</gene>
<evidence type="ECO:0000255" key="1">
    <source>
        <dbReference type="HAMAP-Rule" id="MF_00437"/>
    </source>
</evidence>
<name>YCF4_PINTH</name>
<feature type="chain" id="PRO_0000217623" description="Photosystem I assembly protein Ycf4">
    <location>
        <begin position="1"/>
        <end position="184"/>
    </location>
</feature>
<feature type="transmembrane region" description="Helical" evidence="1">
    <location>
        <begin position="21"/>
        <end position="43"/>
    </location>
</feature>
<feature type="transmembrane region" description="Helical" evidence="1">
    <location>
        <begin position="58"/>
        <end position="78"/>
    </location>
</feature>
<accession>P41620</accession>
<protein>
    <recommendedName>
        <fullName evidence="1">Photosystem I assembly protein Ycf4</fullName>
    </recommendedName>
</protein>
<sequence length="184" mass="21358">MNRRSKWLWIEPITGSRKRSNFFWACILFLGSLGFFLVGISSYFGENLIPLLSSQQILFVPQGIVMCFYGIAGLFISSYLWCTILFNVGSGYNKFDKKKGIVCLFRWGFPGINRRIFPRFLMKDIQMIKMEIQEGISPRRVLYMEIKGRQDIPLTRTGDNVNLREIEQKAAESARFLRVSIEGF</sequence>
<proteinExistence type="inferred from homology"/>
<dbReference type="EMBL" id="D17510">
    <property type="protein sequence ID" value="BAA04362.1"/>
    <property type="molecule type" value="Genomic_DNA"/>
</dbReference>
<dbReference type="PIR" id="T07484">
    <property type="entry name" value="T07484"/>
</dbReference>
<dbReference type="RefSeq" id="NP_042405.1">
    <property type="nucleotide sequence ID" value="NC_001631.1"/>
</dbReference>
<dbReference type="SMR" id="P41620"/>
<dbReference type="GeneID" id="1457659"/>
<dbReference type="GO" id="GO:0009535">
    <property type="term" value="C:chloroplast thylakoid membrane"/>
    <property type="evidence" value="ECO:0007669"/>
    <property type="project" value="UniProtKB-SubCell"/>
</dbReference>
<dbReference type="GO" id="GO:0009522">
    <property type="term" value="C:photosystem I"/>
    <property type="evidence" value="ECO:0007669"/>
    <property type="project" value="InterPro"/>
</dbReference>
<dbReference type="GO" id="GO:0015979">
    <property type="term" value="P:photosynthesis"/>
    <property type="evidence" value="ECO:0007669"/>
    <property type="project" value="UniProtKB-UniRule"/>
</dbReference>
<dbReference type="HAMAP" id="MF_00437">
    <property type="entry name" value="Ycf4"/>
    <property type="match status" value="1"/>
</dbReference>
<dbReference type="InterPro" id="IPR003359">
    <property type="entry name" value="PSI_Ycf4_assembly"/>
</dbReference>
<dbReference type="NCBIfam" id="NF002712">
    <property type="entry name" value="PRK02542.1"/>
    <property type="match status" value="1"/>
</dbReference>
<dbReference type="PANTHER" id="PTHR33288">
    <property type="match status" value="1"/>
</dbReference>
<dbReference type="PANTHER" id="PTHR33288:SF4">
    <property type="entry name" value="PHOTOSYSTEM I ASSEMBLY PROTEIN YCF4"/>
    <property type="match status" value="1"/>
</dbReference>
<dbReference type="Pfam" id="PF02392">
    <property type="entry name" value="Ycf4"/>
    <property type="match status" value="1"/>
</dbReference>
<comment type="function">
    <text evidence="1">Seems to be required for the assembly of the photosystem I complex.</text>
</comment>
<comment type="subcellular location">
    <subcellularLocation>
        <location evidence="1">Plastid</location>
        <location evidence="1">Chloroplast thylakoid membrane</location>
        <topology evidence="1">Multi-pass membrane protein</topology>
    </subcellularLocation>
</comment>
<comment type="similarity">
    <text evidence="1">Belongs to the Ycf4 family.</text>
</comment>
<reference key="1">
    <citation type="journal article" date="1994" name="Proc. Natl. Acad. Sci. U.S.A.">
        <title>Loss of all ndh genes as determined by sequencing the entire chloroplast genome of the black pine Pinus thunbergii.</title>
        <authorList>
            <person name="Wakasugi T."/>
            <person name="Tsudzuki J."/>
            <person name="Ito S."/>
            <person name="Nakashima K."/>
            <person name="Tsudzuki T."/>
            <person name="Sugiura M."/>
        </authorList>
    </citation>
    <scope>NUCLEOTIDE SEQUENCE [LARGE SCALE GENOMIC DNA]</scope>
</reference>